<comment type="function">
    <text evidence="1">Located at the top of the head of the 30S subunit, it contacts several helices of the 16S rRNA. In the 70S ribosome it contacts the 23S rRNA (bridge B1a) and protein L5 of the 50S subunit (bridge B1b), connecting the 2 subunits; these bridges are implicated in subunit movement. Contacts the tRNAs in the A and P-sites.</text>
</comment>
<comment type="subunit">
    <text evidence="1">Part of the 30S ribosomal subunit. Forms a loose heterodimer with protein S19. Forms two bridges to the 50S subunit in the 70S ribosome.</text>
</comment>
<comment type="similarity">
    <text evidence="1">Belongs to the universal ribosomal protein uS13 family.</text>
</comment>
<name>RS13_NEIMF</name>
<accession>A1KRJ6</accession>
<reference key="1">
    <citation type="journal article" date="2007" name="PLoS Genet.">
        <title>Meningococcal genetic variation mechanisms viewed through comparative analysis of serogroup C strain FAM18.</title>
        <authorList>
            <person name="Bentley S.D."/>
            <person name="Vernikos G.S."/>
            <person name="Snyder L.A.S."/>
            <person name="Churcher C."/>
            <person name="Arrowsmith C."/>
            <person name="Chillingworth T."/>
            <person name="Cronin A."/>
            <person name="Davis P.H."/>
            <person name="Holroyd N.E."/>
            <person name="Jagels K."/>
            <person name="Maddison M."/>
            <person name="Moule S."/>
            <person name="Rabbinowitsch E."/>
            <person name="Sharp S."/>
            <person name="Unwin L."/>
            <person name="Whitehead S."/>
            <person name="Quail M.A."/>
            <person name="Achtman M."/>
            <person name="Barrell B.G."/>
            <person name="Saunders N.J."/>
            <person name="Parkhill J."/>
        </authorList>
    </citation>
    <scope>NUCLEOTIDE SEQUENCE [LARGE SCALE GENOMIC DNA]</scope>
    <source>
        <strain>ATCC 700532 / DSM 15464 / FAM18</strain>
    </source>
</reference>
<gene>
    <name evidence="1" type="primary">rpsM</name>
    <name type="ordered locus">NMC0155</name>
</gene>
<protein>
    <recommendedName>
        <fullName evidence="1">Small ribosomal subunit protein uS13</fullName>
    </recommendedName>
    <alternativeName>
        <fullName evidence="3">30S ribosomal protein S13</fullName>
    </alternativeName>
</protein>
<organism>
    <name type="scientific">Neisseria meningitidis serogroup C / serotype 2a (strain ATCC 700532 / DSM 15464 / FAM18)</name>
    <dbReference type="NCBI Taxonomy" id="272831"/>
    <lineage>
        <taxon>Bacteria</taxon>
        <taxon>Pseudomonadati</taxon>
        <taxon>Pseudomonadota</taxon>
        <taxon>Betaproteobacteria</taxon>
        <taxon>Neisseriales</taxon>
        <taxon>Neisseriaceae</taxon>
        <taxon>Neisseria</taxon>
    </lineage>
</organism>
<feature type="chain" id="PRO_0000306659" description="Small ribosomal subunit protein uS13">
    <location>
        <begin position="1"/>
        <end position="120"/>
    </location>
</feature>
<feature type="region of interest" description="Disordered" evidence="2">
    <location>
        <begin position="96"/>
        <end position="120"/>
    </location>
</feature>
<proteinExistence type="inferred from homology"/>
<sequence>MARIAGVNIPNNAHIVIGLQAIYGIGATRAKLICEAANIAPDTKAKDLDETQLDALRDQVAKYEVEGDLRREVTMSIKRLMDMGCYRGFRHRRGLPCRGQRTRTNARTRKGPRKAIAGKK</sequence>
<dbReference type="EMBL" id="AM421808">
    <property type="protein sequence ID" value="CAM09474.1"/>
    <property type="molecule type" value="Genomic_DNA"/>
</dbReference>
<dbReference type="RefSeq" id="WP_002215453.1">
    <property type="nucleotide sequence ID" value="NC_008767.1"/>
</dbReference>
<dbReference type="SMR" id="A1KRJ6"/>
<dbReference type="GeneID" id="93387240"/>
<dbReference type="KEGG" id="nmc:NMC0155"/>
<dbReference type="HOGENOM" id="CLU_103849_1_2_4"/>
<dbReference type="Proteomes" id="UP000002286">
    <property type="component" value="Chromosome"/>
</dbReference>
<dbReference type="GO" id="GO:0005829">
    <property type="term" value="C:cytosol"/>
    <property type="evidence" value="ECO:0007669"/>
    <property type="project" value="TreeGrafter"/>
</dbReference>
<dbReference type="GO" id="GO:0015935">
    <property type="term" value="C:small ribosomal subunit"/>
    <property type="evidence" value="ECO:0007669"/>
    <property type="project" value="TreeGrafter"/>
</dbReference>
<dbReference type="GO" id="GO:0019843">
    <property type="term" value="F:rRNA binding"/>
    <property type="evidence" value="ECO:0007669"/>
    <property type="project" value="UniProtKB-UniRule"/>
</dbReference>
<dbReference type="GO" id="GO:0003735">
    <property type="term" value="F:structural constituent of ribosome"/>
    <property type="evidence" value="ECO:0007669"/>
    <property type="project" value="InterPro"/>
</dbReference>
<dbReference type="GO" id="GO:0000049">
    <property type="term" value="F:tRNA binding"/>
    <property type="evidence" value="ECO:0007669"/>
    <property type="project" value="UniProtKB-UniRule"/>
</dbReference>
<dbReference type="GO" id="GO:0006412">
    <property type="term" value="P:translation"/>
    <property type="evidence" value="ECO:0007669"/>
    <property type="project" value="UniProtKB-UniRule"/>
</dbReference>
<dbReference type="FunFam" id="1.10.8.50:FF:000001">
    <property type="entry name" value="30S ribosomal protein S13"/>
    <property type="match status" value="1"/>
</dbReference>
<dbReference type="FunFam" id="4.10.910.10:FF:000001">
    <property type="entry name" value="30S ribosomal protein S13"/>
    <property type="match status" value="1"/>
</dbReference>
<dbReference type="Gene3D" id="1.10.8.50">
    <property type="match status" value="1"/>
</dbReference>
<dbReference type="Gene3D" id="4.10.910.10">
    <property type="entry name" value="30s ribosomal protein s13, domain 2"/>
    <property type="match status" value="1"/>
</dbReference>
<dbReference type="HAMAP" id="MF_01315">
    <property type="entry name" value="Ribosomal_uS13"/>
    <property type="match status" value="1"/>
</dbReference>
<dbReference type="InterPro" id="IPR027437">
    <property type="entry name" value="Rbsml_uS13_C"/>
</dbReference>
<dbReference type="InterPro" id="IPR001892">
    <property type="entry name" value="Ribosomal_uS13"/>
</dbReference>
<dbReference type="InterPro" id="IPR010979">
    <property type="entry name" value="Ribosomal_uS13-like_H2TH"/>
</dbReference>
<dbReference type="InterPro" id="IPR019980">
    <property type="entry name" value="Ribosomal_uS13_bac-type"/>
</dbReference>
<dbReference type="InterPro" id="IPR018269">
    <property type="entry name" value="Ribosomal_uS13_CS"/>
</dbReference>
<dbReference type="NCBIfam" id="TIGR03631">
    <property type="entry name" value="uS13_bact"/>
    <property type="match status" value="1"/>
</dbReference>
<dbReference type="PANTHER" id="PTHR10871">
    <property type="entry name" value="30S RIBOSOMAL PROTEIN S13/40S RIBOSOMAL PROTEIN S18"/>
    <property type="match status" value="1"/>
</dbReference>
<dbReference type="PANTHER" id="PTHR10871:SF1">
    <property type="entry name" value="SMALL RIBOSOMAL SUBUNIT PROTEIN US13M"/>
    <property type="match status" value="1"/>
</dbReference>
<dbReference type="Pfam" id="PF00416">
    <property type="entry name" value="Ribosomal_S13"/>
    <property type="match status" value="1"/>
</dbReference>
<dbReference type="PIRSF" id="PIRSF002134">
    <property type="entry name" value="Ribosomal_S13"/>
    <property type="match status" value="1"/>
</dbReference>
<dbReference type="SUPFAM" id="SSF46946">
    <property type="entry name" value="S13-like H2TH domain"/>
    <property type="match status" value="1"/>
</dbReference>
<dbReference type="PROSITE" id="PS00646">
    <property type="entry name" value="RIBOSOMAL_S13_1"/>
    <property type="match status" value="1"/>
</dbReference>
<dbReference type="PROSITE" id="PS50159">
    <property type="entry name" value="RIBOSOMAL_S13_2"/>
    <property type="match status" value="1"/>
</dbReference>
<keyword id="KW-0687">Ribonucleoprotein</keyword>
<keyword id="KW-0689">Ribosomal protein</keyword>
<keyword id="KW-0694">RNA-binding</keyword>
<keyword id="KW-0699">rRNA-binding</keyword>
<keyword id="KW-0820">tRNA-binding</keyword>
<evidence type="ECO:0000255" key="1">
    <source>
        <dbReference type="HAMAP-Rule" id="MF_01315"/>
    </source>
</evidence>
<evidence type="ECO:0000256" key="2">
    <source>
        <dbReference type="SAM" id="MobiDB-lite"/>
    </source>
</evidence>
<evidence type="ECO:0000305" key="3"/>